<protein>
    <recommendedName>
        <fullName evidence="1">Succinyl-diaminopimelate desuccinylase</fullName>
        <shortName evidence="1">SDAP desuccinylase</shortName>
        <ecNumber evidence="1">3.5.1.18</ecNumber>
    </recommendedName>
    <alternativeName>
        <fullName evidence="1">N-succinyl-LL-2,6-diaminoheptanedioate amidohydrolase</fullName>
    </alternativeName>
</protein>
<proteinExistence type="inferred from homology"/>
<keyword id="KW-0028">Amino-acid biosynthesis</keyword>
<keyword id="KW-0170">Cobalt</keyword>
<keyword id="KW-0220">Diaminopimelate biosynthesis</keyword>
<keyword id="KW-0378">Hydrolase</keyword>
<keyword id="KW-0457">Lysine biosynthesis</keyword>
<keyword id="KW-0479">Metal-binding</keyword>
<keyword id="KW-1185">Reference proteome</keyword>
<keyword id="KW-0862">Zinc</keyword>
<name>DAPE_ECO57</name>
<accession>Q8XBE0</accession>
<accession>Q7ABP9</accession>
<comment type="function">
    <text evidence="1">Catalyzes the hydrolysis of N-succinyl-L,L-diaminopimelic acid (SDAP), forming succinate and LL-2,6-diaminopimelate (DAP), an intermediate involved in the bacterial biosynthesis of lysine and meso-diaminopimelic acid, an essential component of bacterial cell walls.</text>
</comment>
<comment type="catalytic activity">
    <reaction evidence="1">
        <text>N-succinyl-(2S,6S)-2,6-diaminopimelate + H2O = (2S,6S)-2,6-diaminopimelate + succinate</text>
        <dbReference type="Rhea" id="RHEA:22608"/>
        <dbReference type="ChEBI" id="CHEBI:15377"/>
        <dbReference type="ChEBI" id="CHEBI:30031"/>
        <dbReference type="ChEBI" id="CHEBI:57609"/>
        <dbReference type="ChEBI" id="CHEBI:58087"/>
        <dbReference type="EC" id="3.5.1.18"/>
    </reaction>
</comment>
<comment type="cofactor">
    <cofactor evidence="1">
        <name>Zn(2+)</name>
        <dbReference type="ChEBI" id="CHEBI:29105"/>
    </cofactor>
    <cofactor evidence="1">
        <name>Co(2+)</name>
        <dbReference type="ChEBI" id="CHEBI:48828"/>
    </cofactor>
    <text evidence="1">Binds 2 Zn(2+) or Co(2+) ions per subunit.</text>
</comment>
<comment type="pathway">
    <text evidence="1">Amino-acid biosynthesis; L-lysine biosynthesis via DAP pathway; LL-2,6-diaminopimelate from (S)-tetrahydrodipicolinate (succinylase route): step 3/3.</text>
</comment>
<comment type="subunit">
    <text evidence="1">Homodimer.</text>
</comment>
<comment type="similarity">
    <text evidence="1">Belongs to the peptidase M20A family. DapE subfamily.</text>
</comment>
<reference key="1">
    <citation type="journal article" date="2001" name="Nature">
        <title>Genome sequence of enterohaemorrhagic Escherichia coli O157:H7.</title>
        <authorList>
            <person name="Perna N.T."/>
            <person name="Plunkett G. III"/>
            <person name="Burland V."/>
            <person name="Mau B."/>
            <person name="Glasner J.D."/>
            <person name="Rose D.J."/>
            <person name="Mayhew G.F."/>
            <person name="Evans P.S."/>
            <person name="Gregor J."/>
            <person name="Kirkpatrick H.A."/>
            <person name="Posfai G."/>
            <person name="Hackett J."/>
            <person name="Klink S."/>
            <person name="Boutin A."/>
            <person name="Shao Y."/>
            <person name="Miller L."/>
            <person name="Grotbeck E.J."/>
            <person name="Davis N.W."/>
            <person name="Lim A."/>
            <person name="Dimalanta E.T."/>
            <person name="Potamousis K."/>
            <person name="Apodaca J."/>
            <person name="Anantharaman T.S."/>
            <person name="Lin J."/>
            <person name="Yen G."/>
            <person name="Schwartz D.C."/>
            <person name="Welch R.A."/>
            <person name="Blattner F.R."/>
        </authorList>
    </citation>
    <scope>NUCLEOTIDE SEQUENCE [LARGE SCALE GENOMIC DNA]</scope>
    <source>
        <strain>O157:H7 / EDL933 / ATCC 700927 / EHEC</strain>
    </source>
</reference>
<reference key="2">
    <citation type="journal article" date="2001" name="DNA Res.">
        <title>Complete genome sequence of enterohemorrhagic Escherichia coli O157:H7 and genomic comparison with a laboratory strain K-12.</title>
        <authorList>
            <person name="Hayashi T."/>
            <person name="Makino K."/>
            <person name="Ohnishi M."/>
            <person name="Kurokawa K."/>
            <person name="Ishii K."/>
            <person name="Yokoyama K."/>
            <person name="Han C.-G."/>
            <person name="Ohtsubo E."/>
            <person name="Nakayama K."/>
            <person name="Murata T."/>
            <person name="Tanaka M."/>
            <person name="Tobe T."/>
            <person name="Iida T."/>
            <person name="Takami H."/>
            <person name="Honda T."/>
            <person name="Sasakawa C."/>
            <person name="Ogasawara N."/>
            <person name="Yasunaga T."/>
            <person name="Kuhara S."/>
            <person name="Shiba T."/>
            <person name="Hattori M."/>
            <person name="Shinagawa H."/>
        </authorList>
    </citation>
    <scope>NUCLEOTIDE SEQUENCE [LARGE SCALE GENOMIC DNA]</scope>
    <source>
        <strain>O157:H7 / Sakai / RIMD 0509952 / EHEC</strain>
    </source>
</reference>
<evidence type="ECO:0000255" key="1">
    <source>
        <dbReference type="HAMAP-Rule" id="MF_01690"/>
    </source>
</evidence>
<gene>
    <name evidence="1" type="primary">dapE</name>
    <name type="ordered locus">Z3730</name>
    <name type="ordered locus">ECs3334</name>
</gene>
<organism>
    <name type="scientific">Escherichia coli O157:H7</name>
    <dbReference type="NCBI Taxonomy" id="83334"/>
    <lineage>
        <taxon>Bacteria</taxon>
        <taxon>Pseudomonadati</taxon>
        <taxon>Pseudomonadota</taxon>
        <taxon>Gammaproteobacteria</taxon>
        <taxon>Enterobacterales</taxon>
        <taxon>Enterobacteriaceae</taxon>
        <taxon>Escherichia</taxon>
    </lineage>
</organism>
<dbReference type="EC" id="3.5.1.18" evidence="1"/>
<dbReference type="EMBL" id="AE005174">
    <property type="protein sequence ID" value="AAG57581.1"/>
    <property type="molecule type" value="Genomic_DNA"/>
</dbReference>
<dbReference type="EMBL" id="BA000007">
    <property type="protein sequence ID" value="BAB36757.1"/>
    <property type="molecule type" value="Genomic_DNA"/>
</dbReference>
<dbReference type="PIR" id="A85890">
    <property type="entry name" value="A85890"/>
</dbReference>
<dbReference type="PIR" id="F91045">
    <property type="entry name" value="F91045"/>
</dbReference>
<dbReference type="RefSeq" id="NP_311361.1">
    <property type="nucleotide sequence ID" value="NC_002695.1"/>
</dbReference>
<dbReference type="RefSeq" id="WP_001277793.1">
    <property type="nucleotide sequence ID" value="NZ_VOAI01000001.1"/>
</dbReference>
<dbReference type="SMR" id="Q8XBE0"/>
<dbReference type="STRING" id="155864.Z3730"/>
<dbReference type="MEROPS" id="M20.010"/>
<dbReference type="GeneID" id="915264"/>
<dbReference type="KEGG" id="ece:Z3730"/>
<dbReference type="KEGG" id="ecs:ECs_3334"/>
<dbReference type="PATRIC" id="fig|386585.9.peg.3481"/>
<dbReference type="eggNOG" id="COG0624">
    <property type="taxonomic scope" value="Bacteria"/>
</dbReference>
<dbReference type="HOGENOM" id="CLU_021802_4_0_6"/>
<dbReference type="OMA" id="PKYGWTD"/>
<dbReference type="UniPathway" id="UPA00034">
    <property type="reaction ID" value="UER00021"/>
</dbReference>
<dbReference type="Proteomes" id="UP000000558">
    <property type="component" value="Chromosome"/>
</dbReference>
<dbReference type="Proteomes" id="UP000002519">
    <property type="component" value="Chromosome"/>
</dbReference>
<dbReference type="GO" id="GO:0008777">
    <property type="term" value="F:acetylornithine deacetylase activity"/>
    <property type="evidence" value="ECO:0007669"/>
    <property type="project" value="TreeGrafter"/>
</dbReference>
<dbReference type="GO" id="GO:0050897">
    <property type="term" value="F:cobalt ion binding"/>
    <property type="evidence" value="ECO:0007669"/>
    <property type="project" value="UniProtKB-UniRule"/>
</dbReference>
<dbReference type="GO" id="GO:0009014">
    <property type="term" value="F:succinyl-diaminopimelate desuccinylase activity"/>
    <property type="evidence" value="ECO:0007669"/>
    <property type="project" value="UniProtKB-UniRule"/>
</dbReference>
<dbReference type="GO" id="GO:0008270">
    <property type="term" value="F:zinc ion binding"/>
    <property type="evidence" value="ECO:0007669"/>
    <property type="project" value="UniProtKB-UniRule"/>
</dbReference>
<dbReference type="GO" id="GO:0019877">
    <property type="term" value="P:diaminopimelate biosynthetic process"/>
    <property type="evidence" value="ECO:0007669"/>
    <property type="project" value="UniProtKB-UniRule"/>
</dbReference>
<dbReference type="GO" id="GO:0006526">
    <property type="term" value="P:L-arginine biosynthetic process"/>
    <property type="evidence" value="ECO:0007669"/>
    <property type="project" value="TreeGrafter"/>
</dbReference>
<dbReference type="GO" id="GO:0009089">
    <property type="term" value="P:lysine biosynthetic process via diaminopimelate"/>
    <property type="evidence" value="ECO:0007669"/>
    <property type="project" value="UniProtKB-UniRule"/>
</dbReference>
<dbReference type="CDD" id="cd03891">
    <property type="entry name" value="M20_DapE_proteobac"/>
    <property type="match status" value="1"/>
</dbReference>
<dbReference type="FunFam" id="3.30.70.360:FF:000011">
    <property type="entry name" value="Succinyl-diaminopimelate desuccinylase"/>
    <property type="match status" value="1"/>
</dbReference>
<dbReference type="FunFam" id="3.40.630.10:FF:000005">
    <property type="entry name" value="Succinyl-diaminopimelate desuccinylase"/>
    <property type="match status" value="1"/>
</dbReference>
<dbReference type="FunFam" id="3.40.630.10:FF:000010">
    <property type="entry name" value="Succinyl-diaminopimelate desuccinylase"/>
    <property type="match status" value="1"/>
</dbReference>
<dbReference type="Gene3D" id="3.40.630.10">
    <property type="entry name" value="Zn peptidases"/>
    <property type="match status" value="2"/>
</dbReference>
<dbReference type="HAMAP" id="MF_01690">
    <property type="entry name" value="DapE"/>
    <property type="match status" value="1"/>
</dbReference>
<dbReference type="InterPro" id="IPR001261">
    <property type="entry name" value="ArgE/DapE_CS"/>
</dbReference>
<dbReference type="InterPro" id="IPR036264">
    <property type="entry name" value="Bact_exopeptidase_dim_dom"/>
</dbReference>
<dbReference type="InterPro" id="IPR005941">
    <property type="entry name" value="DapE_proteobac"/>
</dbReference>
<dbReference type="InterPro" id="IPR002933">
    <property type="entry name" value="Peptidase_M20"/>
</dbReference>
<dbReference type="InterPro" id="IPR011650">
    <property type="entry name" value="Peptidase_M20_dimer"/>
</dbReference>
<dbReference type="InterPro" id="IPR050072">
    <property type="entry name" value="Peptidase_M20A"/>
</dbReference>
<dbReference type="NCBIfam" id="TIGR01246">
    <property type="entry name" value="dapE_proteo"/>
    <property type="match status" value="1"/>
</dbReference>
<dbReference type="NCBIfam" id="NF009557">
    <property type="entry name" value="PRK13009.1"/>
    <property type="match status" value="1"/>
</dbReference>
<dbReference type="PANTHER" id="PTHR43808">
    <property type="entry name" value="ACETYLORNITHINE DEACETYLASE"/>
    <property type="match status" value="1"/>
</dbReference>
<dbReference type="PANTHER" id="PTHR43808:SF31">
    <property type="entry name" value="N-ACETYL-L-CITRULLINE DEACETYLASE"/>
    <property type="match status" value="1"/>
</dbReference>
<dbReference type="Pfam" id="PF07687">
    <property type="entry name" value="M20_dimer"/>
    <property type="match status" value="1"/>
</dbReference>
<dbReference type="Pfam" id="PF01546">
    <property type="entry name" value="Peptidase_M20"/>
    <property type="match status" value="1"/>
</dbReference>
<dbReference type="SUPFAM" id="SSF55031">
    <property type="entry name" value="Bacterial exopeptidase dimerisation domain"/>
    <property type="match status" value="1"/>
</dbReference>
<dbReference type="SUPFAM" id="SSF53187">
    <property type="entry name" value="Zn-dependent exopeptidases"/>
    <property type="match status" value="1"/>
</dbReference>
<dbReference type="PROSITE" id="PS00758">
    <property type="entry name" value="ARGE_DAPE_CPG2_1"/>
    <property type="match status" value="1"/>
</dbReference>
<dbReference type="PROSITE" id="PS00759">
    <property type="entry name" value="ARGE_DAPE_CPG2_2"/>
    <property type="match status" value="1"/>
</dbReference>
<feature type="chain" id="PRO_0000375561" description="Succinyl-diaminopimelate desuccinylase">
    <location>
        <begin position="1"/>
        <end position="375"/>
    </location>
</feature>
<feature type="active site" evidence="1">
    <location>
        <position position="68"/>
    </location>
</feature>
<feature type="active site" description="Proton acceptor" evidence="1">
    <location>
        <position position="133"/>
    </location>
</feature>
<feature type="binding site" evidence="1">
    <location>
        <position position="66"/>
    </location>
    <ligand>
        <name>Zn(2+)</name>
        <dbReference type="ChEBI" id="CHEBI:29105"/>
        <label>1</label>
    </ligand>
</feature>
<feature type="binding site" evidence="1">
    <location>
        <position position="99"/>
    </location>
    <ligand>
        <name>Zn(2+)</name>
        <dbReference type="ChEBI" id="CHEBI:29105"/>
        <label>1</label>
    </ligand>
</feature>
<feature type="binding site" evidence="1">
    <location>
        <position position="99"/>
    </location>
    <ligand>
        <name>Zn(2+)</name>
        <dbReference type="ChEBI" id="CHEBI:29105"/>
        <label>2</label>
    </ligand>
</feature>
<feature type="binding site" evidence="1">
    <location>
        <position position="134"/>
    </location>
    <ligand>
        <name>Zn(2+)</name>
        <dbReference type="ChEBI" id="CHEBI:29105"/>
        <label>2</label>
    </ligand>
</feature>
<feature type="binding site" evidence="1">
    <location>
        <position position="162"/>
    </location>
    <ligand>
        <name>Zn(2+)</name>
        <dbReference type="ChEBI" id="CHEBI:29105"/>
        <label>1</label>
    </ligand>
</feature>
<feature type="binding site" evidence="1">
    <location>
        <position position="348"/>
    </location>
    <ligand>
        <name>Zn(2+)</name>
        <dbReference type="ChEBI" id="CHEBI:29105"/>
        <label>2</label>
    </ligand>
</feature>
<sequence length="375" mass="41241">MSCPVIELTQQLIRRPSLSPDDAGCQALLIERLQAIGFTVERMDFADTQNFWAWRGQGETLAFAGHTDVVPPGDADRWINPPFEPTIRDGMLFGRGAADMKGSLAAMVVAAERFVAQHPNHTGRLAFLITSDEEASAHNGTVKAVEALMARNERLDYCLVGEPSSIEVVGDVVKNGRRGSLTCNLTIHGVQGHVAYPHLADNPVHRAAPFLNELVAIEWDQGNEFFPATSMQIANIQAGTGSNNVIPGELFVQFNFRFSTELTDEMIKAQVLALLEKHQLRYTVDWWLSGQPFLTARGKLVDAVVNAVEHYNEIKPQLLTTGGTSDGRFIARMGAQVVELGPVNATIHKINECVNAADLQLLARMYQRIMEQLVA</sequence>